<name>Y2339_MYCBO</name>
<feature type="chain" id="PRO_0000104023" description="Uncharacterized protein Mb2339">
    <location>
        <begin position="1"/>
        <end position="89"/>
    </location>
</feature>
<keyword id="KW-1185">Reference proteome</keyword>
<gene>
    <name type="ordered locus">BQ2027_MB2339</name>
</gene>
<protein>
    <recommendedName>
        <fullName>Uncharacterized protein Mb2339</fullName>
    </recommendedName>
</protein>
<accession>P64992</accession>
<accession>A0A1R3Y0V1</accession>
<accession>P71900</accession>
<accession>X2BK08</accession>
<organism>
    <name type="scientific">Mycobacterium bovis (strain ATCC BAA-935 / AF2122/97)</name>
    <dbReference type="NCBI Taxonomy" id="233413"/>
    <lineage>
        <taxon>Bacteria</taxon>
        <taxon>Bacillati</taxon>
        <taxon>Actinomycetota</taxon>
        <taxon>Actinomycetes</taxon>
        <taxon>Mycobacteriales</taxon>
        <taxon>Mycobacteriaceae</taxon>
        <taxon>Mycobacterium</taxon>
        <taxon>Mycobacterium tuberculosis complex</taxon>
    </lineage>
</organism>
<dbReference type="EMBL" id="LT708304">
    <property type="protein sequence ID" value="SIU00951.1"/>
    <property type="molecule type" value="Genomic_DNA"/>
</dbReference>
<dbReference type="RefSeq" id="NP_855988.1">
    <property type="nucleotide sequence ID" value="NC_002945.3"/>
</dbReference>
<dbReference type="RefSeq" id="WP_003411919.1">
    <property type="nucleotide sequence ID" value="NC_002945.4"/>
</dbReference>
<dbReference type="SMR" id="P64992"/>
<dbReference type="KEGG" id="mbo:BQ2027_MB2339"/>
<dbReference type="PATRIC" id="fig|233413.5.peg.2565"/>
<dbReference type="Proteomes" id="UP000001419">
    <property type="component" value="Chromosome"/>
</dbReference>
<proteinExistence type="predicted"/>
<reference key="1">
    <citation type="journal article" date="2003" name="Proc. Natl. Acad. Sci. U.S.A.">
        <title>The complete genome sequence of Mycobacterium bovis.</title>
        <authorList>
            <person name="Garnier T."/>
            <person name="Eiglmeier K."/>
            <person name="Camus J.-C."/>
            <person name="Medina N."/>
            <person name="Mansoor H."/>
            <person name="Pryor M."/>
            <person name="Duthoy S."/>
            <person name="Grondin S."/>
            <person name="Lacroix C."/>
            <person name="Monsempe C."/>
            <person name="Simon S."/>
            <person name="Harris B."/>
            <person name="Atkin R."/>
            <person name="Doggett J."/>
            <person name="Mayes R."/>
            <person name="Keating L."/>
            <person name="Wheeler P.R."/>
            <person name="Parkhill J."/>
            <person name="Barrell B.G."/>
            <person name="Cole S.T."/>
            <person name="Gordon S.V."/>
            <person name="Hewinson R.G."/>
        </authorList>
    </citation>
    <scope>NUCLEOTIDE SEQUENCE [LARGE SCALE GENOMIC DNA]</scope>
    <source>
        <strain>ATCC BAA-935 / AF2122/97</strain>
    </source>
</reference>
<reference key="2">
    <citation type="journal article" date="2017" name="Genome Announc.">
        <title>Updated reference genome sequence and annotation of Mycobacterium bovis AF2122/97.</title>
        <authorList>
            <person name="Malone K.M."/>
            <person name="Farrell D."/>
            <person name="Stuber T.P."/>
            <person name="Schubert O.T."/>
            <person name="Aebersold R."/>
            <person name="Robbe-Austerman S."/>
            <person name="Gordon S.V."/>
        </authorList>
    </citation>
    <scope>NUCLEOTIDE SEQUENCE [LARGE SCALE GENOMIC DNA]</scope>
    <scope>GENOME REANNOTATION</scope>
    <source>
        <strain>ATCC BAA-935 / AF2122/97</strain>
    </source>
</reference>
<sequence>MMKEIELHLVDAAAPSGEIAIKDLAALATALQELTTRISRDPINTPGPGRTKQFMEELSQLASAPGPDIDGGIDLTDDEFQAFLQAARS</sequence>